<proteinExistence type="inferred from homology"/>
<accession>P57175</accession>
<feature type="chain" id="PRO_0000180878" description="Flagellar M-ring protein">
    <location>
        <begin position="1"/>
        <end position="545"/>
    </location>
</feature>
<feature type="transmembrane region" description="Helical" evidence="2">
    <location>
        <begin position="30"/>
        <end position="50"/>
    </location>
</feature>
<feature type="transmembrane region" description="Helical" evidence="2">
    <location>
        <begin position="449"/>
        <end position="469"/>
    </location>
</feature>
<keyword id="KW-0975">Bacterial flagellum</keyword>
<keyword id="KW-1003">Cell membrane</keyword>
<keyword id="KW-0472">Membrane</keyword>
<keyword id="KW-1185">Reference proteome</keyword>
<keyword id="KW-0812">Transmembrane</keyword>
<keyword id="KW-1133">Transmembrane helix</keyword>
<name>FLIF_BUCAI</name>
<protein>
    <recommendedName>
        <fullName>Flagellar M-ring protein</fullName>
    </recommendedName>
</protein>
<sequence length="545" mass="62605">MNFSTIEESVLKEKKKFNNFLSGFLKNSRFLIILLTAAAITAVSISVWIKSPEYQVLYNHLSNEDRGSIINELNEMKIPYQFTDSDGPILVPKDKVYEIRLRLAENNLPRGGSIGFELLDKEKFGISQYNEQINYHRALEGELARTIKKINSVKNARIHIAFSKSSLFLQDKKKSSASIILELQPGRNLNTGQINAIMHLISSSISDLPVENITIVDQSGKLLNQTSVEYDQVNDSQFKYTEEIETRYRNRIKNILEPLVGIGNIYAQVTAQIDFNAQEKTQEKYSPNSDHKNQSIRSHQIIIHNEIEKSNIQEETPIPLSNSNNHVYFNNNIKNSKNLKNNYIPVDSKINRDNTVNYELNHSVSHTKMNIGEIKRLSAAVIVNFSKDKNGKFVPLSTQKIKNIEHLIREAIGYSKARGDSVHLVNASFAKYDQKIPVHINHINTFRKSNFLYNFAPWFCSFALLFLLLKKYICPFSKNNTFQNTIPVQEKKSIDTRNIIEKNTFQVDLQNNTNTDKLIHKICNISNQNPRTIALIIRQWMSDKI</sequence>
<organism>
    <name type="scientific">Buchnera aphidicola subsp. Acyrthosiphon pisum (strain APS)</name>
    <name type="common">Acyrthosiphon pisum symbiotic bacterium</name>
    <dbReference type="NCBI Taxonomy" id="107806"/>
    <lineage>
        <taxon>Bacteria</taxon>
        <taxon>Pseudomonadati</taxon>
        <taxon>Pseudomonadota</taxon>
        <taxon>Gammaproteobacteria</taxon>
        <taxon>Enterobacterales</taxon>
        <taxon>Erwiniaceae</taxon>
        <taxon>Buchnera</taxon>
    </lineage>
</organism>
<comment type="function">
    <text evidence="1">The M ring may be actively involved in energy transduction.</text>
</comment>
<comment type="subunit">
    <text evidence="1">The basal body constitutes a major portion of the flagellar organelle and consists of four rings (L,P,S, and M) mounted on a central rod. The M ring is integral to the inner membrane of the cell and may be connected to the flagellar rod via the S ring. The S (supramembrane ring) lies just distal to the M ring. The L and P rings lie in the outer membrane and the periplasmic space, respectively (By similarity).</text>
</comment>
<comment type="subcellular location">
    <subcellularLocation>
        <location evidence="1">Cell membrane</location>
        <topology evidence="1">Multi-pass membrane protein</topology>
    </subcellularLocation>
    <subcellularLocation>
        <location evidence="1">Bacterial flagellum basal body</location>
    </subcellularLocation>
</comment>
<comment type="similarity">
    <text evidence="3">Belongs to the FliF family.</text>
</comment>
<gene>
    <name type="primary">fliF</name>
    <name type="ordered locus">BU073</name>
</gene>
<reference key="1">
    <citation type="journal article" date="2000" name="Nature">
        <title>Genome sequence of the endocellular bacterial symbiont of aphids Buchnera sp. APS.</title>
        <authorList>
            <person name="Shigenobu S."/>
            <person name="Watanabe H."/>
            <person name="Hattori M."/>
            <person name="Sakaki Y."/>
            <person name="Ishikawa H."/>
        </authorList>
    </citation>
    <scope>NUCLEOTIDE SEQUENCE [LARGE SCALE GENOMIC DNA]</scope>
    <source>
        <strain>APS</strain>
    </source>
</reference>
<evidence type="ECO:0000250" key="1"/>
<evidence type="ECO:0000255" key="2"/>
<evidence type="ECO:0000305" key="3"/>
<dbReference type="EMBL" id="BA000003">
    <property type="protein sequence ID" value="BAB12793.1"/>
    <property type="molecule type" value="Genomic_DNA"/>
</dbReference>
<dbReference type="RefSeq" id="NP_239907.1">
    <property type="nucleotide sequence ID" value="NC_002528.1"/>
</dbReference>
<dbReference type="RefSeq" id="WP_010895926.1">
    <property type="nucleotide sequence ID" value="NC_002528.1"/>
</dbReference>
<dbReference type="SMR" id="P57175"/>
<dbReference type="STRING" id="563178.BUAP5A_072"/>
<dbReference type="EnsemblBacteria" id="BAB12793">
    <property type="protein sequence ID" value="BAB12793"/>
    <property type="gene ID" value="BAB12793"/>
</dbReference>
<dbReference type="KEGG" id="buc:BU073"/>
<dbReference type="PATRIC" id="fig|107806.10.peg.79"/>
<dbReference type="eggNOG" id="COG1766">
    <property type="taxonomic scope" value="Bacteria"/>
</dbReference>
<dbReference type="HOGENOM" id="CLU_028108_1_0_6"/>
<dbReference type="Proteomes" id="UP000001806">
    <property type="component" value="Chromosome"/>
</dbReference>
<dbReference type="GO" id="GO:0009431">
    <property type="term" value="C:bacterial-type flagellum basal body, MS ring"/>
    <property type="evidence" value="ECO:0007669"/>
    <property type="project" value="InterPro"/>
</dbReference>
<dbReference type="GO" id="GO:0005886">
    <property type="term" value="C:plasma membrane"/>
    <property type="evidence" value="ECO:0007669"/>
    <property type="project" value="UniProtKB-SubCell"/>
</dbReference>
<dbReference type="GO" id="GO:0003774">
    <property type="term" value="F:cytoskeletal motor activity"/>
    <property type="evidence" value="ECO:0007669"/>
    <property type="project" value="InterPro"/>
</dbReference>
<dbReference type="GO" id="GO:0071973">
    <property type="term" value="P:bacterial-type flagellum-dependent cell motility"/>
    <property type="evidence" value="ECO:0007669"/>
    <property type="project" value="InterPro"/>
</dbReference>
<dbReference type="Gene3D" id="3.30.300.30">
    <property type="match status" value="1"/>
</dbReference>
<dbReference type="InterPro" id="IPR045851">
    <property type="entry name" value="AMP-bd_C_sf"/>
</dbReference>
<dbReference type="InterPro" id="IPR013556">
    <property type="entry name" value="Flag_M-ring_C"/>
</dbReference>
<dbReference type="InterPro" id="IPR000067">
    <property type="entry name" value="FlgMring_FliF"/>
</dbReference>
<dbReference type="InterPro" id="IPR006182">
    <property type="entry name" value="FliF_N_dom"/>
</dbReference>
<dbReference type="InterPro" id="IPR043427">
    <property type="entry name" value="YscJ/FliF"/>
</dbReference>
<dbReference type="NCBIfam" id="TIGR00206">
    <property type="entry name" value="fliF"/>
    <property type="match status" value="1"/>
</dbReference>
<dbReference type="PANTHER" id="PTHR30046">
    <property type="entry name" value="FLAGELLAR M-RING PROTEIN"/>
    <property type="match status" value="1"/>
</dbReference>
<dbReference type="PANTHER" id="PTHR30046:SF0">
    <property type="entry name" value="FLAGELLAR M-RING PROTEIN"/>
    <property type="match status" value="1"/>
</dbReference>
<dbReference type="Pfam" id="PF01514">
    <property type="entry name" value="YscJ_FliF"/>
    <property type="match status" value="1"/>
</dbReference>
<dbReference type="Pfam" id="PF08345">
    <property type="entry name" value="YscJ_FliF_C"/>
    <property type="match status" value="1"/>
</dbReference>
<dbReference type="PIRSF" id="PIRSF004862">
    <property type="entry name" value="FliF"/>
    <property type="match status" value="1"/>
</dbReference>
<dbReference type="PRINTS" id="PR01009">
    <property type="entry name" value="FLGMRINGFLIF"/>
</dbReference>